<keyword id="KW-1185">Reference proteome</keyword>
<keyword id="KW-0732">Signal</keyword>
<sequence>MKTGIVTTLIALCLPVSVFATTLRLSTDVDLLVLDGKKVSSSLLRGADSIELDNGPHQLVFRVEKTIHLSNSEERLYISPPLVVSFNTQLINQVNFRLPRLENEREANHFDAAPRLELLDGDATPIPVKLDILAITSTAKTIDYEVEVERYNKSAKRASLPQFATMMADDSTLLSGVSELDAIPPQSQVLTEQRLKYWFKLADPQTRNTFLQWAEKQPSS</sequence>
<name>YCCT_ECO27</name>
<proteinExistence type="inferred from homology"/>
<accession>B7UN43</accession>
<protein>
    <recommendedName>
        <fullName evidence="1">UPF0319 protein YccT</fullName>
    </recommendedName>
</protein>
<organism>
    <name type="scientific">Escherichia coli O127:H6 (strain E2348/69 / EPEC)</name>
    <dbReference type="NCBI Taxonomy" id="574521"/>
    <lineage>
        <taxon>Bacteria</taxon>
        <taxon>Pseudomonadati</taxon>
        <taxon>Pseudomonadota</taxon>
        <taxon>Gammaproteobacteria</taxon>
        <taxon>Enterobacterales</taxon>
        <taxon>Enterobacteriaceae</taxon>
        <taxon>Escherichia</taxon>
    </lineage>
</organism>
<dbReference type="EMBL" id="FM180568">
    <property type="protein sequence ID" value="CAS08498.1"/>
    <property type="molecule type" value="Genomic_DNA"/>
</dbReference>
<dbReference type="RefSeq" id="WP_000847791.1">
    <property type="nucleotide sequence ID" value="NC_011601.1"/>
</dbReference>
<dbReference type="KEGG" id="ecg:E2348C_0950"/>
<dbReference type="HOGENOM" id="CLU_073782_2_0_6"/>
<dbReference type="Proteomes" id="UP000008205">
    <property type="component" value="Chromosome"/>
</dbReference>
<dbReference type="HAMAP" id="MF_00789">
    <property type="entry name" value="UPF0319"/>
    <property type="match status" value="1"/>
</dbReference>
<dbReference type="InterPro" id="IPR018635">
    <property type="entry name" value="UPF0319"/>
</dbReference>
<dbReference type="NCBIfam" id="NF047712">
    <property type="entry name" value="CrliSynInhib"/>
    <property type="match status" value="1"/>
</dbReference>
<dbReference type="NCBIfam" id="NF002967">
    <property type="entry name" value="PRK03641.1"/>
    <property type="match status" value="1"/>
</dbReference>
<dbReference type="PANTHER" id="PTHR38108">
    <property type="entry name" value="UPF0319 PROTEIN YCCT"/>
    <property type="match status" value="1"/>
</dbReference>
<dbReference type="PANTHER" id="PTHR38108:SF1">
    <property type="entry name" value="UPF0319 PROTEIN YCCT"/>
    <property type="match status" value="1"/>
</dbReference>
<dbReference type="Pfam" id="PF09829">
    <property type="entry name" value="DUF2057"/>
    <property type="match status" value="1"/>
</dbReference>
<reference key="1">
    <citation type="journal article" date="2009" name="J. Bacteriol.">
        <title>Complete genome sequence and comparative genome analysis of enteropathogenic Escherichia coli O127:H6 strain E2348/69.</title>
        <authorList>
            <person name="Iguchi A."/>
            <person name="Thomson N.R."/>
            <person name="Ogura Y."/>
            <person name="Saunders D."/>
            <person name="Ooka T."/>
            <person name="Henderson I.R."/>
            <person name="Harris D."/>
            <person name="Asadulghani M."/>
            <person name="Kurokawa K."/>
            <person name="Dean P."/>
            <person name="Kenny B."/>
            <person name="Quail M.A."/>
            <person name="Thurston S."/>
            <person name="Dougan G."/>
            <person name="Hayashi T."/>
            <person name="Parkhill J."/>
            <person name="Frankel G."/>
        </authorList>
    </citation>
    <scope>NUCLEOTIDE SEQUENCE [LARGE SCALE GENOMIC DNA]</scope>
    <source>
        <strain>E2348/69 / EPEC</strain>
    </source>
</reference>
<feature type="signal peptide" evidence="1">
    <location>
        <begin position="1"/>
        <end position="20"/>
    </location>
</feature>
<feature type="chain" id="PRO_1000148486" description="UPF0319 protein YccT">
    <location>
        <begin position="21"/>
        <end position="220"/>
    </location>
</feature>
<evidence type="ECO:0000255" key="1">
    <source>
        <dbReference type="HAMAP-Rule" id="MF_00789"/>
    </source>
</evidence>
<gene>
    <name evidence="1" type="primary">yccT</name>
    <name type="ordered locus">E2348C_0950</name>
</gene>
<comment type="similarity">
    <text evidence="1">Belongs to the UPF0319 family.</text>
</comment>